<evidence type="ECO:0000250" key="1"/>
<evidence type="ECO:0000250" key="2">
    <source>
        <dbReference type="UniProtKB" id="Q9ERR1"/>
    </source>
</evidence>
<evidence type="ECO:0000255" key="3"/>
<evidence type="ECO:0000256" key="4">
    <source>
        <dbReference type="SAM" id="MobiDB-lite"/>
    </source>
</evidence>
<evidence type="ECO:0000305" key="5"/>
<reference key="1">
    <citation type="submission" date="2004-06" db="EMBL/GenBank/DDBJ databases">
        <authorList>
            <consortium name="NIH - Xenopus Gene Collection (XGC) project"/>
        </authorList>
    </citation>
    <scope>NUCLEOTIDE SEQUENCE [LARGE SCALE MRNA]</scope>
    <source>
        <tissue>Brain</tissue>
    </source>
</reference>
<gene>
    <name type="primary">ndel1-a</name>
</gene>
<keyword id="KW-0175">Coiled coil</keyword>
<keyword id="KW-0963">Cytoplasm</keyword>
<keyword id="KW-0206">Cytoskeleton</keyword>
<keyword id="KW-0493">Microtubule</keyword>
<keyword id="KW-0597">Phosphoprotein</keyword>
<keyword id="KW-1185">Reference proteome</keyword>
<keyword id="KW-0813">Transport</keyword>
<name>NDL1A_XENLA</name>
<proteinExistence type="evidence at transcript level"/>
<feature type="chain" id="PRO_0000240219" description="Nuclear distribution protein nudE-like 1-A">
    <location>
        <begin position="1"/>
        <end position="345"/>
    </location>
</feature>
<feature type="region of interest" description="Disordered" evidence="4">
    <location>
        <begin position="182"/>
        <end position="206"/>
    </location>
</feature>
<feature type="region of interest" description="Disordered" evidence="4">
    <location>
        <begin position="326"/>
        <end position="345"/>
    </location>
</feature>
<feature type="coiled-coil region" evidence="3">
    <location>
        <begin position="19"/>
        <end position="190"/>
    </location>
</feature>
<feature type="compositionally biased region" description="Basic and acidic residues" evidence="4">
    <location>
        <begin position="182"/>
        <end position="192"/>
    </location>
</feature>
<feature type="compositionally biased region" description="Pro residues" evidence="4">
    <location>
        <begin position="334"/>
        <end position="345"/>
    </location>
</feature>
<protein>
    <recommendedName>
        <fullName>Nuclear distribution protein nudE-like 1-A</fullName>
    </recommendedName>
</protein>
<dbReference type="EMBL" id="BC074498">
    <property type="protein sequence ID" value="AAH74498.1"/>
    <property type="molecule type" value="mRNA"/>
</dbReference>
<dbReference type="RefSeq" id="NP_001086332.1">
    <property type="nucleotide sequence ID" value="NM_001092863.1"/>
</dbReference>
<dbReference type="RefSeq" id="XP_018089890.1">
    <property type="nucleotide sequence ID" value="XM_018234401.1"/>
</dbReference>
<dbReference type="SMR" id="Q6DK98"/>
<dbReference type="BioGRID" id="102924">
    <property type="interactions" value="1"/>
</dbReference>
<dbReference type="DNASU" id="444761"/>
<dbReference type="GeneID" id="444761"/>
<dbReference type="KEGG" id="xla:444761"/>
<dbReference type="AGR" id="Xenbase:XB-GENE-989308"/>
<dbReference type="CTD" id="444761"/>
<dbReference type="Xenbase" id="XB-GENE-989308">
    <property type="gene designation" value="ndel1.L"/>
</dbReference>
<dbReference type="OMA" id="KTYREHA"/>
<dbReference type="OrthoDB" id="5877028at2759"/>
<dbReference type="Proteomes" id="UP000186698">
    <property type="component" value="Chromosome 9_10L"/>
</dbReference>
<dbReference type="Bgee" id="444761">
    <property type="expression patterns" value="Expressed in muscle tissue and 19 other cell types or tissues"/>
</dbReference>
<dbReference type="GO" id="GO:0005813">
    <property type="term" value="C:centrosome"/>
    <property type="evidence" value="ECO:0000318"/>
    <property type="project" value="GO_Central"/>
</dbReference>
<dbReference type="GO" id="GO:0005737">
    <property type="term" value="C:cytoplasm"/>
    <property type="evidence" value="ECO:0007669"/>
    <property type="project" value="UniProtKB-KW"/>
</dbReference>
<dbReference type="GO" id="GO:0005871">
    <property type="term" value="C:kinesin complex"/>
    <property type="evidence" value="ECO:0000318"/>
    <property type="project" value="GO_Central"/>
</dbReference>
<dbReference type="GO" id="GO:0000776">
    <property type="term" value="C:kinetochore"/>
    <property type="evidence" value="ECO:0000318"/>
    <property type="project" value="GO_Central"/>
</dbReference>
<dbReference type="GO" id="GO:0005874">
    <property type="term" value="C:microtubule"/>
    <property type="evidence" value="ECO:0007669"/>
    <property type="project" value="UniProtKB-KW"/>
</dbReference>
<dbReference type="GO" id="GO:0005819">
    <property type="term" value="C:spindle"/>
    <property type="evidence" value="ECO:0007669"/>
    <property type="project" value="UniProtKB-SubCell"/>
</dbReference>
<dbReference type="GO" id="GO:0008017">
    <property type="term" value="F:microtubule binding"/>
    <property type="evidence" value="ECO:0000318"/>
    <property type="project" value="GO_Central"/>
</dbReference>
<dbReference type="GO" id="GO:0016477">
    <property type="term" value="P:cell migration"/>
    <property type="evidence" value="ECO:0000318"/>
    <property type="project" value="GO_Central"/>
</dbReference>
<dbReference type="GO" id="GO:0051642">
    <property type="term" value="P:centrosome localization"/>
    <property type="evidence" value="ECO:0000318"/>
    <property type="project" value="GO_Central"/>
</dbReference>
<dbReference type="GO" id="GO:0007059">
    <property type="term" value="P:chromosome segregation"/>
    <property type="evidence" value="ECO:0000318"/>
    <property type="project" value="GO_Central"/>
</dbReference>
<dbReference type="GO" id="GO:0051303">
    <property type="term" value="P:establishment of chromosome localization"/>
    <property type="evidence" value="ECO:0000318"/>
    <property type="project" value="GO_Central"/>
</dbReference>
<dbReference type="GO" id="GO:0000132">
    <property type="term" value="P:establishment of mitotic spindle orientation"/>
    <property type="evidence" value="ECO:0000318"/>
    <property type="project" value="GO_Central"/>
</dbReference>
<dbReference type="GO" id="GO:0032418">
    <property type="term" value="P:lysosome localization"/>
    <property type="evidence" value="ECO:0000250"/>
    <property type="project" value="UniProtKB"/>
</dbReference>
<dbReference type="GO" id="GO:0007020">
    <property type="term" value="P:microtubule nucleation"/>
    <property type="evidence" value="ECO:0000318"/>
    <property type="project" value="GO_Central"/>
</dbReference>
<dbReference type="GO" id="GO:0007100">
    <property type="term" value="P:mitotic centrosome separation"/>
    <property type="evidence" value="ECO:0000318"/>
    <property type="project" value="GO_Central"/>
</dbReference>
<dbReference type="GO" id="GO:1900029">
    <property type="term" value="P:positive regulation of ruffle assembly"/>
    <property type="evidence" value="ECO:0000250"/>
    <property type="project" value="UniProtKB"/>
</dbReference>
<dbReference type="GO" id="GO:0010975">
    <property type="term" value="P:regulation of neuron projection development"/>
    <property type="evidence" value="ECO:0000318"/>
    <property type="project" value="GO_Central"/>
</dbReference>
<dbReference type="GO" id="GO:0047496">
    <property type="term" value="P:vesicle transport along microtubule"/>
    <property type="evidence" value="ECO:0000318"/>
    <property type="project" value="GO_Central"/>
</dbReference>
<dbReference type="Gene3D" id="6.10.250.1080">
    <property type="match status" value="1"/>
</dbReference>
<dbReference type="InterPro" id="IPR033494">
    <property type="entry name" value="NUDE"/>
</dbReference>
<dbReference type="InterPro" id="IPR006964">
    <property type="entry name" value="NUDE_dom"/>
</dbReference>
<dbReference type="PANTHER" id="PTHR10921">
    <property type="entry name" value="NUCLEAR DISTRIBUTION PROTEIN NUDE HOMOLOG 1"/>
    <property type="match status" value="1"/>
</dbReference>
<dbReference type="PANTHER" id="PTHR10921:SF0">
    <property type="entry name" value="NUCLEAR DISTRIBUTION PROTEIN NUDE-LIKE 1"/>
    <property type="match status" value="1"/>
</dbReference>
<dbReference type="Pfam" id="PF04880">
    <property type="entry name" value="NUDE_C"/>
    <property type="match status" value="1"/>
</dbReference>
<accession>Q6DK98</accession>
<comment type="function">
    <text evidence="1 2">Required for organization of the cellular microtubule array and microtubule anchoring at the centrosome. Positively regulates the activity of the minus-end directed microtubule motor protein dynein. May enhance dynein-mediated microtubule sliding by targeting dynein to the microtubule plus end. Positively regulates lysosome peripheral distribution and ruffled border formation in osteoclasts.</text>
</comment>
<comment type="subcellular location">
    <subcellularLocation>
        <location evidence="1">Cytoplasm</location>
        <location evidence="1">Cytoskeleton</location>
    </subcellularLocation>
    <subcellularLocation>
        <location evidence="1">Cytoplasm</location>
        <location evidence="1">Cytoskeleton</location>
        <location evidence="1">Microtubule organizing center</location>
        <location evidence="1">Centrosome</location>
    </subcellularLocation>
    <subcellularLocation>
        <location evidence="1">Cytoplasm</location>
        <location evidence="1">Cytoskeleton</location>
        <location evidence="1">Spindle</location>
    </subcellularLocation>
    <text evidence="1">Localizes to the interphase centrosome and the mitotic spindle.</text>
</comment>
<comment type="PTM">
    <text evidence="1">Phosphorylated in mitosis.</text>
</comment>
<comment type="similarity">
    <text evidence="5">Belongs to the nudE family.</text>
</comment>
<organism>
    <name type="scientific">Xenopus laevis</name>
    <name type="common">African clawed frog</name>
    <dbReference type="NCBI Taxonomy" id="8355"/>
    <lineage>
        <taxon>Eukaryota</taxon>
        <taxon>Metazoa</taxon>
        <taxon>Chordata</taxon>
        <taxon>Craniata</taxon>
        <taxon>Vertebrata</taxon>
        <taxon>Euteleostomi</taxon>
        <taxon>Amphibia</taxon>
        <taxon>Batrachia</taxon>
        <taxon>Anura</taxon>
        <taxon>Pipoidea</taxon>
        <taxon>Pipidae</taxon>
        <taxon>Xenopodinae</taxon>
        <taxon>Xenopus</taxon>
        <taxon>Xenopus</taxon>
    </lineage>
</organism>
<sequence>MENEEIPEFLSPKEEIVYWRELSKRLKQSYQEARDELIEFQEGSRELEAELETQLVQAEQRNRDLLSDNQRLKCEVESLKEKLEHQYAQSYKQVSLLEDELARARSIKDQLHKYVRELEQANDDLERAKRATIVSLEDFEQRLNQAIERNAFLESELDEKESLLVSVQRLKDEARDLRQELAVRERQTDGTRKSAPSSPTLDCDKTDSAVQASLSLPATPVGKICDNSFTSPKGIPNGFGTTPLTPSARISALNIVGDLLRKVGALESKLAACRNFAKDQASRKSYTPVNLNSNSSSSVLNSSGVKYSHAGHTSFFDKGAVNGYEPPGVLGSRPPSPPGMLPLSV</sequence>